<feature type="chain" id="PRO_0000208762" description="Uncharacterized transporter bll3471">
    <location>
        <begin position="1"/>
        <end position="562"/>
    </location>
</feature>
<feature type="transmembrane region" description="Helical" evidence="1">
    <location>
        <begin position="4"/>
        <end position="26"/>
    </location>
</feature>
<feature type="transmembrane region" description="Helical" evidence="1">
    <location>
        <begin position="33"/>
        <end position="55"/>
    </location>
</feature>
<feature type="transmembrane region" description="Helical" evidence="1">
    <location>
        <begin position="59"/>
        <end position="78"/>
    </location>
</feature>
<feature type="transmembrane region" description="Helical" evidence="1">
    <location>
        <begin position="90"/>
        <end position="112"/>
    </location>
</feature>
<feature type="transmembrane region" description="Helical" evidence="1">
    <location>
        <begin position="159"/>
        <end position="181"/>
    </location>
</feature>
<feature type="transmembrane region" description="Helical" evidence="1">
    <location>
        <begin position="385"/>
        <end position="402"/>
    </location>
</feature>
<feature type="transmembrane region" description="Helical" evidence="1">
    <location>
        <begin position="406"/>
        <end position="428"/>
    </location>
</feature>
<feature type="transmembrane region" description="Helical" evidence="1">
    <location>
        <begin position="449"/>
        <end position="471"/>
    </location>
</feature>
<feature type="transmembrane region" description="Helical" evidence="1">
    <location>
        <begin position="476"/>
        <end position="498"/>
    </location>
</feature>
<feature type="transmembrane region" description="Helical" evidence="1">
    <location>
        <begin position="505"/>
        <end position="524"/>
    </location>
</feature>
<feature type="transmembrane region" description="Helical" evidence="1">
    <location>
        <begin position="539"/>
        <end position="561"/>
    </location>
</feature>
<feature type="domain" description="RCK C-terminal 1" evidence="2">
    <location>
        <begin position="207"/>
        <end position="287"/>
    </location>
</feature>
<feature type="domain" description="RCK C-terminal 2" evidence="2">
    <location>
        <begin position="295"/>
        <end position="375"/>
    </location>
</feature>
<gene>
    <name type="ordered locus">bll3471</name>
</gene>
<protein>
    <recommendedName>
        <fullName>Uncharacterized transporter bll3471</fullName>
    </recommendedName>
</protein>
<proteinExistence type="inferred from homology"/>
<evidence type="ECO:0000255" key="1"/>
<evidence type="ECO:0000255" key="2">
    <source>
        <dbReference type="PROSITE-ProRule" id="PRU00544"/>
    </source>
</evidence>
<evidence type="ECO:0000305" key="3"/>
<name>Y3471_BRADU</name>
<sequence length="562" mass="58052">MDTVRWIISTAPEIFLLLAVAIGTMLGRLKIHGFAIGTTACILIVSVLIGQLGTFTFPALLRIVLFSLFVFTIGYKSGPEFFASLSVRTLAQVAMALVLGGTGLVIVLAFAFALKLDPGTASGLAAGALTQSSVIGTASGALAQLGLPKTVLEQQEANIAAGYAVTYVLGYILTLLYVPFAAPKLMGVNLKDEAKKLEVELSGGAPPKTENLSYRKFQARAYRVTAAAGRTVKAIEEDIGSRTVIERIVRQGADIEPRLDTVLEAGDDIVIAGRTAAIVAAKPIIGTEIDADEILKAIPGNVLDVLVDNRNLHGRSIRDVADRIGGDARGVFLRALTRHGREAPLSADTRVYVGDVMTLVGSTRNIERAAKQVGQIVRSGDRTDIAFLAAGIAAGLLAGLVSFKVGGIALTLGGGGGALIAGLLCGWLRSRRPTMGAMPPAAQQTLSDLGLGGFIAAIGLANGHAAWVAIQAHGLLLVGMGLVVTLVPLVVATLFAYHVLRMNPVITCGALAGAMTVDAAVTGACEIAESQTPVLGVAVPYAVGNVVLTVLGPIIVACTFVG</sequence>
<dbReference type="EMBL" id="BA000040">
    <property type="protein sequence ID" value="BAC48736.1"/>
    <property type="molecule type" value="Genomic_DNA"/>
</dbReference>
<dbReference type="RefSeq" id="NP_770111.1">
    <property type="nucleotide sequence ID" value="NC_004463.1"/>
</dbReference>
<dbReference type="RefSeq" id="WP_011086255.1">
    <property type="nucleotide sequence ID" value="NC_004463.1"/>
</dbReference>
<dbReference type="SMR" id="Q89PK9"/>
<dbReference type="STRING" id="224911.AAV28_14385"/>
<dbReference type="EnsemblBacteria" id="BAC48736">
    <property type="protein sequence ID" value="BAC48736"/>
    <property type="gene ID" value="BAC48736"/>
</dbReference>
<dbReference type="GeneID" id="46490502"/>
<dbReference type="KEGG" id="bja:bll3471"/>
<dbReference type="PATRIC" id="fig|224911.44.peg.3127"/>
<dbReference type="eggNOG" id="COG2985">
    <property type="taxonomic scope" value="Bacteria"/>
</dbReference>
<dbReference type="HOGENOM" id="CLU_035023_2_2_5"/>
<dbReference type="InParanoid" id="Q89PK9"/>
<dbReference type="OrthoDB" id="5166626at2"/>
<dbReference type="PhylomeDB" id="Q89PK9"/>
<dbReference type="Proteomes" id="UP000002526">
    <property type="component" value="Chromosome"/>
</dbReference>
<dbReference type="GO" id="GO:0005886">
    <property type="term" value="C:plasma membrane"/>
    <property type="evidence" value="ECO:0000318"/>
    <property type="project" value="GO_Central"/>
</dbReference>
<dbReference type="GO" id="GO:0008324">
    <property type="term" value="F:monoatomic cation transmembrane transporter activity"/>
    <property type="evidence" value="ECO:0007669"/>
    <property type="project" value="InterPro"/>
</dbReference>
<dbReference type="GO" id="GO:0006813">
    <property type="term" value="P:potassium ion transport"/>
    <property type="evidence" value="ECO:0007669"/>
    <property type="project" value="InterPro"/>
</dbReference>
<dbReference type="Gene3D" id="3.30.70.1450">
    <property type="entry name" value="Regulator of K+ conductance, C-terminal domain"/>
    <property type="match status" value="1"/>
</dbReference>
<dbReference type="InterPro" id="IPR050144">
    <property type="entry name" value="AAE_transporter"/>
</dbReference>
<dbReference type="InterPro" id="IPR006037">
    <property type="entry name" value="RCK_C"/>
</dbReference>
<dbReference type="InterPro" id="IPR036721">
    <property type="entry name" value="RCK_C_sf"/>
</dbReference>
<dbReference type="InterPro" id="IPR006512">
    <property type="entry name" value="YidE_YbjL"/>
</dbReference>
<dbReference type="NCBIfam" id="TIGR01625">
    <property type="entry name" value="YidE_YbjL_dupl"/>
    <property type="match status" value="1"/>
</dbReference>
<dbReference type="PANTHER" id="PTHR30445:SF9">
    <property type="match status" value="1"/>
</dbReference>
<dbReference type="PANTHER" id="PTHR30445">
    <property type="entry name" value="K(+)_H(+) ANTIPORTER SUBUNIT KHTT"/>
    <property type="match status" value="1"/>
</dbReference>
<dbReference type="Pfam" id="PF06826">
    <property type="entry name" value="Asp-Al_Ex"/>
    <property type="match status" value="2"/>
</dbReference>
<dbReference type="SUPFAM" id="SSF116726">
    <property type="entry name" value="TrkA C-terminal domain-like"/>
    <property type="match status" value="2"/>
</dbReference>
<dbReference type="PROSITE" id="PS51202">
    <property type="entry name" value="RCK_C"/>
    <property type="match status" value="2"/>
</dbReference>
<comment type="subcellular location">
    <subcellularLocation>
        <location evidence="3">Cell membrane</location>
        <topology evidence="3">Multi-pass membrane protein</topology>
    </subcellularLocation>
</comment>
<comment type="similarity">
    <text evidence="3">Belongs to the AAE transporter (TC 2.A.81) family.</text>
</comment>
<organism>
    <name type="scientific">Bradyrhizobium diazoefficiens (strain JCM 10833 / BCRC 13528 / IAM 13628 / NBRC 14792 / USDA 110)</name>
    <dbReference type="NCBI Taxonomy" id="224911"/>
    <lineage>
        <taxon>Bacteria</taxon>
        <taxon>Pseudomonadati</taxon>
        <taxon>Pseudomonadota</taxon>
        <taxon>Alphaproteobacteria</taxon>
        <taxon>Hyphomicrobiales</taxon>
        <taxon>Nitrobacteraceae</taxon>
        <taxon>Bradyrhizobium</taxon>
    </lineage>
</organism>
<accession>Q89PK9</accession>
<reference key="1">
    <citation type="journal article" date="2002" name="DNA Res.">
        <title>Complete genomic sequence of nitrogen-fixing symbiotic bacterium Bradyrhizobium japonicum USDA110.</title>
        <authorList>
            <person name="Kaneko T."/>
            <person name="Nakamura Y."/>
            <person name="Sato S."/>
            <person name="Minamisawa K."/>
            <person name="Uchiumi T."/>
            <person name="Sasamoto S."/>
            <person name="Watanabe A."/>
            <person name="Idesawa K."/>
            <person name="Iriguchi M."/>
            <person name="Kawashima K."/>
            <person name="Kohara M."/>
            <person name="Matsumoto M."/>
            <person name="Shimpo S."/>
            <person name="Tsuruoka H."/>
            <person name="Wada T."/>
            <person name="Yamada M."/>
            <person name="Tabata S."/>
        </authorList>
    </citation>
    <scope>NUCLEOTIDE SEQUENCE [LARGE SCALE GENOMIC DNA]</scope>
    <source>
        <strain>JCM 10833 / BCRC 13528 / IAM 13628 / NBRC 14792 / USDA 110</strain>
    </source>
</reference>
<keyword id="KW-1003">Cell membrane</keyword>
<keyword id="KW-0472">Membrane</keyword>
<keyword id="KW-1185">Reference proteome</keyword>
<keyword id="KW-0677">Repeat</keyword>
<keyword id="KW-0812">Transmembrane</keyword>
<keyword id="KW-1133">Transmembrane helix</keyword>
<keyword id="KW-0813">Transport</keyword>